<gene>
    <name type="ORF">ORF II</name>
</gene>
<organism>
    <name type="scientific">Cauliflower mosaic virus (strain W260)</name>
    <name type="common">CaMV</name>
    <dbReference type="NCBI Taxonomy" id="31558"/>
    <lineage>
        <taxon>Viruses</taxon>
        <taxon>Riboviria</taxon>
        <taxon>Pararnavirae</taxon>
        <taxon>Artverviricota</taxon>
        <taxon>Revtraviricetes</taxon>
        <taxon>Ortervirales</taxon>
        <taxon>Caulimoviridae</taxon>
        <taxon>Caulimovirus</taxon>
        <taxon>Caulimovirus tessellobrassicae</taxon>
    </lineage>
</organism>
<evidence type="ECO:0000305" key="1"/>
<reference key="1">
    <citation type="journal article" date="1992" name="Virology">
        <title>Three regions of cauliflower mosaic virus strain W260 are involved in systemic infection of solanaceous hosts.</title>
        <authorList>
            <person name="Qiu S.G."/>
            <person name="Schoelz J.E."/>
        </authorList>
    </citation>
    <scope>NUCLEOTIDE SEQUENCE [GENOMIC DNA]</scope>
</reference>
<proteinExistence type="inferred from homology"/>
<sequence>MSITGQPHVYKKDTIIRLKPLSLNSNNRSYVLVPQKGNIQNIINHLNNLNEIVGRSLLGIWKINSYFGLSKDPSESKSKNPSVFNTAKTIFKSGGVDYS</sequence>
<protein>
    <recommendedName>
        <fullName>Aphid transmission protein</fullName>
    </recommendedName>
    <alternativeName>
        <fullName>Atf</fullName>
    </alternativeName>
    <alternativeName>
        <fullName>Protein 2</fullName>
    </alternativeName>
</protein>
<name>VAT_CAMVW</name>
<organismHost>
    <name type="scientific">Arabidopsis thaliana</name>
    <name type="common">Mouse-ear cress</name>
    <dbReference type="NCBI Taxonomy" id="3702"/>
</organismHost>
<organismHost>
    <name type="scientific">Brassica</name>
    <dbReference type="NCBI Taxonomy" id="3705"/>
</organismHost>
<organismHost>
    <name type="scientific">Raphanus</name>
    <dbReference type="NCBI Taxonomy" id="3725"/>
</organismHost>
<comment type="function">
    <text>This protein is involved in virus transmission.</text>
</comment>
<comment type="similarity">
    <text evidence="1">Belongs to the caulimoviridae ORF II family.</text>
</comment>
<accession>Q01087</accession>
<dbReference type="EMBL" id="M94887">
    <property type="protein sequence ID" value="AAA46364.1"/>
    <property type="molecule type" value="Genomic_DNA"/>
</dbReference>
<dbReference type="SMR" id="Q01087"/>
<dbReference type="InterPro" id="IPR004917">
    <property type="entry name" value="Caulimo_AT"/>
</dbReference>
<dbReference type="Pfam" id="PF03233">
    <property type="entry name" value="Cauli_AT"/>
    <property type="match status" value="1"/>
</dbReference>
<feature type="chain" id="PRO_0000222073" description="Aphid transmission protein">
    <location>
        <begin position="1"/>
        <end position="99" status="greater than"/>
    </location>
</feature>
<feature type="non-terminal residue">
    <location>
        <position position="99"/>
    </location>
</feature>